<organism>
    <name type="scientific">Yersinia pestis (strain Pestoides F)</name>
    <dbReference type="NCBI Taxonomy" id="386656"/>
    <lineage>
        <taxon>Bacteria</taxon>
        <taxon>Pseudomonadati</taxon>
        <taxon>Pseudomonadota</taxon>
        <taxon>Gammaproteobacteria</taxon>
        <taxon>Enterobacterales</taxon>
        <taxon>Yersiniaceae</taxon>
        <taxon>Yersinia</taxon>
    </lineage>
</organism>
<gene>
    <name evidence="1" type="primary">ruvB</name>
    <name type="ordered locus">YPDSF_1064</name>
</gene>
<reference key="1">
    <citation type="submission" date="2007-02" db="EMBL/GenBank/DDBJ databases">
        <title>Complete sequence of chromosome of Yersinia pestis Pestoides F.</title>
        <authorList>
            <consortium name="US DOE Joint Genome Institute"/>
            <person name="Copeland A."/>
            <person name="Lucas S."/>
            <person name="Lapidus A."/>
            <person name="Barry K."/>
            <person name="Detter J.C."/>
            <person name="Glavina del Rio T."/>
            <person name="Hammon N."/>
            <person name="Israni S."/>
            <person name="Dalin E."/>
            <person name="Tice H."/>
            <person name="Pitluck S."/>
            <person name="Di Bartolo G."/>
            <person name="Chain P."/>
            <person name="Malfatti S."/>
            <person name="Shin M."/>
            <person name="Vergez L."/>
            <person name="Schmutz J."/>
            <person name="Larimer F."/>
            <person name="Land M."/>
            <person name="Hauser L."/>
            <person name="Worsham P."/>
            <person name="Chu M."/>
            <person name="Bearden S."/>
            <person name="Garcia E."/>
            <person name="Richardson P."/>
        </authorList>
    </citation>
    <scope>NUCLEOTIDE SEQUENCE [LARGE SCALE GENOMIC DNA]</scope>
    <source>
        <strain>Pestoides F</strain>
    </source>
</reference>
<evidence type="ECO:0000255" key="1">
    <source>
        <dbReference type="HAMAP-Rule" id="MF_00016"/>
    </source>
</evidence>
<accession>A4TJK0</accession>
<dbReference type="EC" id="3.6.4.-" evidence="1"/>
<dbReference type="EMBL" id="CP000668">
    <property type="protein sequence ID" value="ABP39462.1"/>
    <property type="molecule type" value="Genomic_DNA"/>
</dbReference>
<dbReference type="RefSeq" id="WP_002211198.1">
    <property type="nucleotide sequence ID" value="NZ_CP009715.1"/>
</dbReference>
<dbReference type="SMR" id="A4TJK0"/>
<dbReference type="GeneID" id="57976603"/>
<dbReference type="KEGG" id="ypp:YPDSF_1064"/>
<dbReference type="PATRIC" id="fig|386656.14.peg.2769"/>
<dbReference type="GO" id="GO:0005737">
    <property type="term" value="C:cytoplasm"/>
    <property type="evidence" value="ECO:0007669"/>
    <property type="project" value="UniProtKB-SubCell"/>
</dbReference>
<dbReference type="GO" id="GO:0048476">
    <property type="term" value="C:Holliday junction resolvase complex"/>
    <property type="evidence" value="ECO:0007669"/>
    <property type="project" value="UniProtKB-UniRule"/>
</dbReference>
<dbReference type="GO" id="GO:0005524">
    <property type="term" value="F:ATP binding"/>
    <property type="evidence" value="ECO:0007669"/>
    <property type="project" value="UniProtKB-UniRule"/>
</dbReference>
<dbReference type="GO" id="GO:0016887">
    <property type="term" value="F:ATP hydrolysis activity"/>
    <property type="evidence" value="ECO:0007669"/>
    <property type="project" value="InterPro"/>
</dbReference>
<dbReference type="GO" id="GO:0000400">
    <property type="term" value="F:four-way junction DNA binding"/>
    <property type="evidence" value="ECO:0007669"/>
    <property type="project" value="UniProtKB-UniRule"/>
</dbReference>
<dbReference type="GO" id="GO:0009378">
    <property type="term" value="F:four-way junction helicase activity"/>
    <property type="evidence" value="ECO:0007669"/>
    <property type="project" value="InterPro"/>
</dbReference>
<dbReference type="GO" id="GO:0006310">
    <property type="term" value="P:DNA recombination"/>
    <property type="evidence" value="ECO:0007669"/>
    <property type="project" value="UniProtKB-UniRule"/>
</dbReference>
<dbReference type="GO" id="GO:0006281">
    <property type="term" value="P:DNA repair"/>
    <property type="evidence" value="ECO:0007669"/>
    <property type="project" value="UniProtKB-UniRule"/>
</dbReference>
<dbReference type="CDD" id="cd00009">
    <property type="entry name" value="AAA"/>
    <property type="match status" value="1"/>
</dbReference>
<dbReference type="FunFam" id="1.10.10.10:FF:000086">
    <property type="entry name" value="Holliday junction ATP-dependent DNA helicase RuvB"/>
    <property type="match status" value="1"/>
</dbReference>
<dbReference type="FunFam" id="1.10.8.60:FF:000023">
    <property type="entry name" value="Holliday junction ATP-dependent DNA helicase RuvB"/>
    <property type="match status" value="1"/>
</dbReference>
<dbReference type="FunFam" id="3.40.50.300:FF:000073">
    <property type="entry name" value="Holliday junction ATP-dependent DNA helicase RuvB"/>
    <property type="match status" value="1"/>
</dbReference>
<dbReference type="Gene3D" id="1.10.8.60">
    <property type="match status" value="1"/>
</dbReference>
<dbReference type="Gene3D" id="3.40.50.300">
    <property type="entry name" value="P-loop containing nucleotide triphosphate hydrolases"/>
    <property type="match status" value="1"/>
</dbReference>
<dbReference type="Gene3D" id="1.10.10.10">
    <property type="entry name" value="Winged helix-like DNA-binding domain superfamily/Winged helix DNA-binding domain"/>
    <property type="match status" value="1"/>
</dbReference>
<dbReference type="HAMAP" id="MF_00016">
    <property type="entry name" value="DNA_HJ_migration_RuvB"/>
    <property type="match status" value="1"/>
</dbReference>
<dbReference type="InterPro" id="IPR003593">
    <property type="entry name" value="AAA+_ATPase"/>
</dbReference>
<dbReference type="InterPro" id="IPR041445">
    <property type="entry name" value="AAA_lid_4"/>
</dbReference>
<dbReference type="InterPro" id="IPR004605">
    <property type="entry name" value="DNA_helicase_Holl-junc_RuvB"/>
</dbReference>
<dbReference type="InterPro" id="IPR027417">
    <property type="entry name" value="P-loop_NTPase"/>
</dbReference>
<dbReference type="InterPro" id="IPR008824">
    <property type="entry name" value="RuvB-like_N"/>
</dbReference>
<dbReference type="InterPro" id="IPR008823">
    <property type="entry name" value="RuvB_C"/>
</dbReference>
<dbReference type="InterPro" id="IPR036388">
    <property type="entry name" value="WH-like_DNA-bd_sf"/>
</dbReference>
<dbReference type="InterPro" id="IPR036390">
    <property type="entry name" value="WH_DNA-bd_sf"/>
</dbReference>
<dbReference type="NCBIfam" id="NF000868">
    <property type="entry name" value="PRK00080.1"/>
    <property type="match status" value="1"/>
</dbReference>
<dbReference type="NCBIfam" id="TIGR00635">
    <property type="entry name" value="ruvB"/>
    <property type="match status" value="1"/>
</dbReference>
<dbReference type="PANTHER" id="PTHR42848">
    <property type="match status" value="1"/>
</dbReference>
<dbReference type="PANTHER" id="PTHR42848:SF1">
    <property type="entry name" value="HOLLIDAY JUNCTION BRANCH MIGRATION COMPLEX SUBUNIT RUVB"/>
    <property type="match status" value="1"/>
</dbReference>
<dbReference type="Pfam" id="PF17864">
    <property type="entry name" value="AAA_lid_4"/>
    <property type="match status" value="1"/>
</dbReference>
<dbReference type="Pfam" id="PF05491">
    <property type="entry name" value="RuvB_C"/>
    <property type="match status" value="1"/>
</dbReference>
<dbReference type="Pfam" id="PF05496">
    <property type="entry name" value="RuvB_N"/>
    <property type="match status" value="1"/>
</dbReference>
<dbReference type="SMART" id="SM00382">
    <property type="entry name" value="AAA"/>
    <property type="match status" value="1"/>
</dbReference>
<dbReference type="SUPFAM" id="SSF52540">
    <property type="entry name" value="P-loop containing nucleoside triphosphate hydrolases"/>
    <property type="match status" value="1"/>
</dbReference>
<dbReference type="SUPFAM" id="SSF46785">
    <property type="entry name" value="Winged helix' DNA-binding domain"/>
    <property type="match status" value="1"/>
</dbReference>
<protein>
    <recommendedName>
        <fullName evidence="1">Holliday junction branch migration complex subunit RuvB</fullName>
        <ecNumber evidence="1">3.6.4.-</ecNumber>
    </recommendedName>
</protein>
<proteinExistence type="inferred from homology"/>
<feature type="chain" id="PRO_1000001502" description="Holliday junction branch migration complex subunit RuvB">
    <location>
        <begin position="1"/>
        <end position="334"/>
    </location>
</feature>
<feature type="region of interest" description="Large ATPase domain (RuvB-L)" evidence="1">
    <location>
        <begin position="4"/>
        <end position="184"/>
    </location>
</feature>
<feature type="region of interest" description="Small ATPAse domain (RuvB-S)" evidence="1">
    <location>
        <begin position="185"/>
        <end position="255"/>
    </location>
</feature>
<feature type="region of interest" description="Head domain (RuvB-H)" evidence="1">
    <location>
        <begin position="258"/>
        <end position="334"/>
    </location>
</feature>
<feature type="binding site" evidence="1">
    <location>
        <position position="23"/>
    </location>
    <ligand>
        <name>ATP</name>
        <dbReference type="ChEBI" id="CHEBI:30616"/>
    </ligand>
</feature>
<feature type="binding site" evidence="1">
    <location>
        <position position="24"/>
    </location>
    <ligand>
        <name>ATP</name>
        <dbReference type="ChEBI" id="CHEBI:30616"/>
    </ligand>
</feature>
<feature type="binding site" evidence="1">
    <location>
        <position position="65"/>
    </location>
    <ligand>
        <name>ATP</name>
        <dbReference type="ChEBI" id="CHEBI:30616"/>
    </ligand>
</feature>
<feature type="binding site" evidence="1">
    <location>
        <position position="68"/>
    </location>
    <ligand>
        <name>ATP</name>
        <dbReference type="ChEBI" id="CHEBI:30616"/>
    </ligand>
</feature>
<feature type="binding site" evidence="1">
    <location>
        <position position="69"/>
    </location>
    <ligand>
        <name>ATP</name>
        <dbReference type="ChEBI" id="CHEBI:30616"/>
    </ligand>
</feature>
<feature type="binding site" evidence="1">
    <location>
        <position position="69"/>
    </location>
    <ligand>
        <name>Mg(2+)</name>
        <dbReference type="ChEBI" id="CHEBI:18420"/>
    </ligand>
</feature>
<feature type="binding site" evidence="1">
    <location>
        <position position="70"/>
    </location>
    <ligand>
        <name>ATP</name>
        <dbReference type="ChEBI" id="CHEBI:30616"/>
    </ligand>
</feature>
<feature type="binding site" evidence="1">
    <location>
        <begin position="131"/>
        <end position="133"/>
    </location>
    <ligand>
        <name>ATP</name>
        <dbReference type="ChEBI" id="CHEBI:30616"/>
    </ligand>
</feature>
<feature type="binding site" evidence="1">
    <location>
        <position position="174"/>
    </location>
    <ligand>
        <name>ATP</name>
        <dbReference type="ChEBI" id="CHEBI:30616"/>
    </ligand>
</feature>
<feature type="binding site" evidence="1">
    <location>
        <position position="184"/>
    </location>
    <ligand>
        <name>ATP</name>
        <dbReference type="ChEBI" id="CHEBI:30616"/>
    </ligand>
</feature>
<feature type="binding site" evidence="1">
    <location>
        <position position="221"/>
    </location>
    <ligand>
        <name>ATP</name>
        <dbReference type="ChEBI" id="CHEBI:30616"/>
    </ligand>
</feature>
<feature type="binding site" evidence="1">
    <location>
        <position position="294"/>
    </location>
    <ligand>
        <name>DNA</name>
        <dbReference type="ChEBI" id="CHEBI:16991"/>
    </ligand>
</feature>
<feature type="binding site" evidence="1">
    <location>
        <position position="313"/>
    </location>
    <ligand>
        <name>DNA</name>
        <dbReference type="ChEBI" id="CHEBI:16991"/>
    </ligand>
</feature>
<feature type="binding site" evidence="1">
    <location>
        <position position="318"/>
    </location>
    <ligand>
        <name>DNA</name>
        <dbReference type="ChEBI" id="CHEBI:16991"/>
    </ligand>
</feature>
<comment type="function">
    <text evidence="1">The RuvA-RuvB-RuvC complex processes Holliday junction (HJ) DNA during genetic recombination and DNA repair, while the RuvA-RuvB complex plays an important role in the rescue of blocked DNA replication forks via replication fork reversal (RFR). RuvA specifically binds to HJ cruciform DNA, conferring on it an open structure. The RuvB hexamer acts as an ATP-dependent pump, pulling dsDNA into and through the RuvAB complex. RuvB forms 2 homohexamers on either side of HJ DNA bound by 1 or 2 RuvA tetramers; 4 subunits per hexamer contact DNA at a time. Coordinated motions by a converter formed by DNA-disengaged RuvB subunits stimulates ATP hydrolysis and nucleotide exchange. Immobilization of the converter enables RuvB to convert the ATP-contained energy into a lever motion, pulling 2 nucleotides of DNA out of the RuvA tetramer per ATP hydrolyzed, thus driving DNA branch migration. The RuvB motors rotate together with the DNA substrate, which together with the progressing nucleotide cycle form the mechanistic basis for DNA recombination by continuous HJ branch migration. Branch migration allows RuvC to scan DNA until it finds its consensus sequence, where it cleaves and resolves cruciform DNA.</text>
</comment>
<comment type="catalytic activity">
    <reaction evidence="1">
        <text>ATP + H2O = ADP + phosphate + H(+)</text>
        <dbReference type="Rhea" id="RHEA:13065"/>
        <dbReference type="ChEBI" id="CHEBI:15377"/>
        <dbReference type="ChEBI" id="CHEBI:15378"/>
        <dbReference type="ChEBI" id="CHEBI:30616"/>
        <dbReference type="ChEBI" id="CHEBI:43474"/>
        <dbReference type="ChEBI" id="CHEBI:456216"/>
    </reaction>
</comment>
<comment type="subunit">
    <text evidence="1">Homohexamer. Forms an RuvA(8)-RuvB(12)-Holliday junction (HJ) complex. HJ DNA is sandwiched between 2 RuvA tetramers; dsDNA enters through RuvA and exits via RuvB. An RuvB hexamer assembles on each DNA strand where it exits the tetramer. Each RuvB hexamer is contacted by two RuvA subunits (via domain III) on 2 adjacent RuvB subunits; this complex drives branch migration. In the full resolvosome a probable DNA-RuvA(4)-RuvB(12)-RuvC(2) complex forms which resolves the HJ.</text>
</comment>
<comment type="subcellular location">
    <subcellularLocation>
        <location evidence="1">Cytoplasm</location>
    </subcellularLocation>
</comment>
<comment type="domain">
    <text evidence="1">Has 3 domains, the large (RuvB-L) and small ATPase (RuvB-S) domains and the C-terminal head (RuvB-H) domain. The head domain binds DNA, while the ATPase domains jointly bind ATP, ADP or are empty depending on the state of the subunit in the translocation cycle. During a single DNA translocation step the structure of each domain remains the same, but their relative positions change.</text>
</comment>
<comment type="similarity">
    <text evidence="1">Belongs to the RuvB family.</text>
</comment>
<keyword id="KW-0067">ATP-binding</keyword>
<keyword id="KW-0963">Cytoplasm</keyword>
<keyword id="KW-0227">DNA damage</keyword>
<keyword id="KW-0233">DNA recombination</keyword>
<keyword id="KW-0234">DNA repair</keyword>
<keyword id="KW-0238">DNA-binding</keyword>
<keyword id="KW-0378">Hydrolase</keyword>
<keyword id="KW-0547">Nucleotide-binding</keyword>
<name>RUVB_YERPP</name>
<sequence>MIEADRLISAAVINDEESIDRAIRPKLLTEYVGQPHVREQMEIFIQAAKQRGDALDHVLIFGPPGLGKTTLANIIANEMGVNLRTTSGPVLEKAGDLAAMLTNLEPHDVLFIDEIHRLSPVVEEILYPAMEDYQLDIMIGEGPAARSIKLDLPPFTLIGATTRAGSLTSPLRDRFGIVQRLEFYQVADLEHIVSRSAKCLGLELTPEGAHQLARRSRGTPRITNRLLRRVRDFAEVRADGAINGEVAMKALDMLNVDAEGFDFMDRKLLLAVIDKFMGGPVGLDNLAAAIGEERETIEDVLEPYLIQQGFIQRTPRGRIATNHAYKHFGITREE</sequence>